<proteinExistence type="evidence at transcript level"/>
<keyword id="KW-0385">Hypusine</keyword>
<keyword id="KW-0396">Initiation factor</keyword>
<keyword id="KW-0648">Protein biosynthesis</keyword>
<reference key="1">
    <citation type="submission" date="2001-08" db="EMBL/GenBank/DDBJ databases">
        <title>Alfalfa translation initiation factor 5A-2 from salt tolerant callus.</title>
        <authorList>
            <person name="Winicov I."/>
        </authorList>
    </citation>
    <scope>NUCLEOTIDE SEQUENCE [MRNA]</scope>
    <source>
        <strain>cv. Regen S</strain>
        <tissue>Callus</tissue>
    </source>
</reference>
<sequence length="159" mass="17284">MSDEEHHFEPAADAGASKTYPQQAGTIRKNGYIVIKSRPCKVVEVSTSKTGKHGHAKCHFVAIDIFNGKKLEDIVPSSHNCDVPHVNRTDYQLIDISEDGFVSLLTDNGSTKDDLKLPTDDSLLTQIKDGFADGKDLVVSVMSAMGEEQICALKDIGPK</sequence>
<evidence type="ECO:0000250" key="1">
    <source>
        <dbReference type="UniProtKB" id="P23301"/>
    </source>
</evidence>
<evidence type="ECO:0000250" key="2">
    <source>
        <dbReference type="UniProtKB" id="Q9XI91"/>
    </source>
</evidence>
<evidence type="ECO:0000256" key="3">
    <source>
        <dbReference type="SAM" id="MobiDB-lite"/>
    </source>
</evidence>
<evidence type="ECO:0000305" key="4"/>
<feature type="chain" id="PRO_0000142474" description="Eukaryotic translation initiation factor 5A-2">
    <location>
        <begin position="1"/>
        <end position="159"/>
    </location>
</feature>
<feature type="region of interest" description="Disordered" evidence="3">
    <location>
        <begin position="1"/>
        <end position="21"/>
    </location>
</feature>
<feature type="compositionally biased region" description="Basic and acidic residues" evidence="3">
    <location>
        <begin position="1"/>
        <end position="10"/>
    </location>
</feature>
<feature type="modified residue" description="Hypusine" evidence="2">
    <location>
        <position position="52"/>
    </location>
</feature>
<organism>
    <name type="scientific">Medicago sativa</name>
    <name type="common">Alfalfa</name>
    <dbReference type="NCBI Taxonomy" id="3879"/>
    <lineage>
        <taxon>Eukaryota</taxon>
        <taxon>Viridiplantae</taxon>
        <taxon>Streptophyta</taxon>
        <taxon>Embryophyta</taxon>
        <taxon>Tracheophyta</taxon>
        <taxon>Spermatophyta</taxon>
        <taxon>Magnoliopsida</taxon>
        <taxon>eudicotyledons</taxon>
        <taxon>Gunneridae</taxon>
        <taxon>Pentapetalae</taxon>
        <taxon>rosids</taxon>
        <taxon>fabids</taxon>
        <taxon>Fabales</taxon>
        <taxon>Fabaceae</taxon>
        <taxon>Papilionoideae</taxon>
        <taxon>50 kb inversion clade</taxon>
        <taxon>NPAAA clade</taxon>
        <taxon>Hologalegina</taxon>
        <taxon>IRL clade</taxon>
        <taxon>Trifolieae</taxon>
        <taxon>Medicago</taxon>
    </lineage>
</organism>
<dbReference type="EMBL" id="AF416338">
    <property type="protein sequence ID" value="AAL10404.1"/>
    <property type="molecule type" value="mRNA"/>
</dbReference>
<dbReference type="SMR" id="Q945F4"/>
<dbReference type="GO" id="GO:0043022">
    <property type="term" value="F:ribosome binding"/>
    <property type="evidence" value="ECO:0007669"/>
    <property type="project" value="InterPro"/>
</dbReference>
<dbReference type="GO" id="GO:0003723">
    <property type="term" value="F:RNA binding"/>
    <property type="evidence" value="ECO:0007669"/>
    <property type="project" value="InterPro"/>
</dbReference>
<dbReference type="GO" id="GO:0003746">
    <property type="term" value="F:translation elongation factor activity"/>
    <property type="evidence" value="ECO:0007669"/>
    <property type="project" value="InterPro"/>
</dbReference>
<dbReference type="GO" id="GO:0003743">
    <property type="term" value="F:translation initiation factor activity"/>
    <property type="evidence" value="ECO:0007669"/>
    <property type="project" value="UniProtKB-KW"/>
</dbReference>
<dbReference type="GO" id="GO:0045901">
    <property type="term" value="P:positive regulation of translational elongation"/>
    <property type="evidence" value="ECO:0007669"/>
    <property type="project" value="InterPro"/>
</dbReference>
<dbReference type="GO" id="GO:0045905">
    <property type="term" value="P:positive regulation of translational termination"/>
    <property type="evidence" value="ECO:0007669"/>
    <property type="project" value="InterPro"/>
</dbReference>
<dbReference type="CDD" id="cd04468">
    <property type="entry name" value="S1_eIF5A"/>
    <property type="match status" value="1"/>
</dbReference>
<dbReference type="FunFam" id="2.30.30.30:FF:000012">
    <property type="entry name" value="Eukaryotic translation initiation factor 5A"/>
    <property type="match status" value="1"/>
</dbReference>
<dbReference type="FunFam" id="2.40.50.140:FF:000034">
    <property type="entry name" value="Eukaryotic translation initiation factor 5A"/>
    <property type="match status" value="1"/>
</dbReference>
<dbReference type="Gene3D" id="2.30.30.30">
    <property type="match status" value="1"/>
</dbReference>
<dbReference type="Gene3D" id="2.40.50.140">
    <property type="entry name" value="Nucleic acid-binding proteins"/>
    <property type="match status" value="1"/>
</dbReference>
<dbReference type="InterPro" id="IPR001884">
    <property type="entry name" value="IF5A-like"/>
</dbReference>
<dbReference type="InterPro" id="IPR048670">
    <property type="entry name" value="IF5A-like_N"/>
</dbReference>
<dbReference type="InterPro" id="IPR012340">
    <property type="entry name" value="NA-bd_OB-fold"/>
</dbReference>
<dbReference type="InterPro" id="IPR014722">
    <property type="entry name" value="Rib_uL2_dom2"/>
</dbReference>
<dbReference type="InterPro" id="IPR019769">
    <property type="entry name" value="Trans_elong_IF5A_hypusine_site"/>
</dbReference>
<dbReference type="InterPro" id="IPR020189">
    <property type="entry name" value="Transl_elong_IF5A_C"/>
</dbReference>
<dbReference type="InterPro" id="IPR008991">
    <property type="entry name" value="Translation_prot_SH3-like_sf"/>
</dbReference>
<dbReference type="NCBIfam" id="TIGR00037">
    <property type="entry name" value="eIF_5A"/>
    <property type="match status" value="1"/>
</dbReference>
<dbReference type="PANTHER" id="PTHR11673">
    <property type="entry name" value="TRANSLATION INITIATION FACTOR 5A FAMILY MEMBER"/>
    <property type="match status" value="1"/>
</dbReference>
<dbReference type="Pfam" id="PF01287">
    <property type="entry name" value="eIF-5a"/>
    <property type="match status" value="1"/>
</dbReference>
<dbReference type="Pfam" id="PF21485">
    <property type="entry name" value="IF5A-like_N"/>
    <property type="match status" value="1"/>
</dbReference>
<dbReference type="PIRSF" id="PIRSF003025">
    <property type="entry name" value="eIF5A"/>
    <property type="match status" value="1"/>
</dbReference>
<dbReference type="SMART" id="SM01376">
    <property type="entry name" value="eIF-5a"/>
    <property type="match status" value="1"/>
</dbReference>
<dbReference type="SUPFAM" id="SSF50249">
    <property type="entry name" value="Nucleic acid-binding proteins"/>
    <property type="match status" value="1"/>
</dbReference>
<dbReference type="SUPFAM" id="SSF50104">
    <property type="entry name" value="Translation proteins SH3-like domain"/>
    <property type="match status" value="1"/>
</dbReference>
<dbReference type="PROSITE" id="PS00302">
    <property type="entry name" value="IF5A_HYPUSINE"/>
    <property type="match status" value="1"/>
</dbReference>
<comment type="function">
    <text evidence="1">Translation factor that promotes translation elongation and termination, particularly upon ribosome stalling at specific amino acid sequence contexts (By similarity). Binds between the exit (E) and peptidyl (P) site of the ribosome and promotes rescue of stalled ribosome: specifically required for efficient translation of polyproline-containing peptides as well as other motifs that stall the ribosome (By similarity). Acts as a ribosome quality control (RQC) cofactor by joining the RQC complex to facilitate peptidyl transfer during CAT tailing step (By similarity).</text>
</comment>
<comment type="PTM">
    <text evidence="2">Lys-52 undergoes hypusination, a unique post-translational modification that consists in the addition of a butylamino group from spermidine to lysine side chain, leading to the formation of the unusual amino acid hypusine. eIF-5As are the only known proteins to undergo this modification, which is essential for their function.</text>
</comment>
<comment type="similarity">
    <text evidence="4">Belongs to the eIF-5A family.</text>
</comment>
<name>IF5A2_MEDSA</name>
<protein>
    <recommendedName>
        <fullName>Eukaryotic translation initiation factor 5A-2</fullName>
        <shortName>eIF-5A-2</shortName>
    </recommendedName>
</protein>
<accession>Q945F4</accession>